<name>MTLD_MYCPU</name>
<reference key="1">
    <citation type="journal article" date="2001" name="Nucleic Acids Res.">
        <title>The complete genome sequence of the murine respiratory pathogen Mycoplasma pulmonis.</title>
        <authorList>
            <person name="Chambaud I."/>
            <person name="Heilig R."/>
            <person name="Ferris S."/>
            <person name="Barbe V."/>
            <person name="Samson D."/>
            <person name="Galisson F."/>
            <person name="Moszer I."/>
            <person name="Dybvig K."/>
            <person name="Wroblewski H."/>
            <person name="Viari A."/>
            <person name="Rocha E.P.C."/>
            <person name="Blanchard A."/>
        </authorList>
    </citation>
    <scope>NUCLEOTIDE SEQUENCE [LARGE SCALE GENOMIC DNA]</scope>
    <source>
        <strain>UAB CTIP</strain>
    </source>
</reference>
<protein>
    <recommendedName>
        <fullName evidence="1">Mannitol-1-phosphate 5-dehydrogenase</fullName>
        <ecNumber evidence="1">1.1.1.17</ecNumber>
    </recommendedName>
</protein>
<proteinExistence type="inferred from homology"/>
<comment type="catalytic activity">
    <reaction evidence="1">
        <text>D-mannitol 1-phosphate + NAD(+) = beta-D-fructose 6-phosphate + NADH + H(+)</text>
        <dbReference type="Rhea" id="RHEA:19661"/>
        <dbReference type="ChEBI" id="CHEBI:15378"/>
        <dbReference type="ChEBI" id="CHEBI:57540"/>
        <dbReference type="ChEBI" id="CHEBI:57634"/>
        <dbReference type="ChEBI" id="CHEBI:57945"/>
        <dbReference type="ChEBI" id="CHEBI:61381"/>
        <dbReference type="EC" id="1.1.1.17"/>
    </reaction>
</comment>
<comment type="similarity">
    <text evidence="1">Belongs to the mannitol dehydrogenase family.</text>
</comment>
<accession>Q98PH2</accession>
<dbReference type="EC" id="1.1.1.17" evidence="1"/>
<dbReference type="EMBL" id="AL445565">
    <property type="protein sequence ID" value="CAC13923.1"/>
    <property type="molecule type" value="Genomic_DNA"/>
</dbReference>
<dbReference type="PIR" id="F90605">
    <property type="entry name" value="F90605"/>
</dbReference>
<dbReference type="RefSeq" id="WP_010925551.1">
    <property type="nucleotide sequence ID" value="NC_002771.1"/>
</dbReference>
<dbReference type="SMR" id="Q98PH2"/>
<dbReference type="STRING" id="272635.gene:17577361"/>
<dbReference type="KEGG" id="mpu:MYPU_7500"/>
<dbReference type="eggNOG" id="COG0246">
    <property type="taxonomic scope" value="Bacteria"/>
</dbReference>
<dbReference type="HOGENOM" id="CLU_036089_2_0_14"/>
<dbReference type="BioCyc" id="MPUL272635:G1GT6-761-MONOMER"/>
<dbReference type="Proteomes" id="UP000000528">
    <property type="component" value="Chromosome"/>
</dbReference>
<dbReference type="GO" id="GO:0005829">
    <property type="term" value="C:cytosol"/>
    <property type="evidence" value="ECO:0007669"/>
    <property type="project" value="TreeGrafter"/>
</dbReference>
<dbReference type="GO" id="GO:0008926">
    <property type="term" value="F:mannitol-1-phosphate 5-dehydrogenase activity"/>
    <property type="evidence" value="ECO:0007669"/>
    <property type="project" value="UniProtKB-UniRule"/>
</dbReference>
<dbReference type="GO" id="GO:0019592">
    <property type="term" value="P:mannitol catabolic process"/>
    <property type="evidence" value="ECO:0007669"/>
    <property type="project" value="TreeGrafter"/>
</dbReference>
<dbReference type="Gene3D" id="1.10.1040.10">
    <property type="entry name" value="N-(1-d-carboxylethyl)-l-norvaline Dehydrogenase, domain 2"/>
    <property type="match status" value="1"/>
</dbReference>
<dbReference type="Gene3D" id="3.40.50.720">
    <property type="entry name" value="NAD(P)-binding Rossmann-like Domain"/>
    <property type="match status" value="1"/>
</dbReference>
<dbReference type="HAMAP" id="MF_00196">
    <property type="entry name" value="Mannitol_dehydrog"/>
    <property type="match status" value="1"/>
</dbReference>
<dbReference type="InterPro" id="IPR008927">
    <property type="entry name" value="6-PGluconate_DH-like_C_sf"/>
</dbReference>
<dbReference type="InterPro" id="IPR013328">
    <property type="entry name" value="6PGD_dom2"/>
</dbReference>
<dbReference type="InterPro" id="IPR023028">
    <property type="entry name" value="Mannitol_1_phos_5_DH"/>
</dbReference>
<dbReference type="InterPro" id="IPR000669">
    <property type="entry name" value="Mannitol_DH"/>
</dbReference>
<dbReference type="InterPro" id="IPR013118">
    <property type="entry name" value="Mannitol_DH_C"/>
</dbReference>
<dbReference type="InterPro" id="IPR013131">
    <property type="entry name" value="Mannitol_DH_N"/>
</dbReference>
<dbReference type="InterPro" id="IPR036291">
    <property type="entry name" value="NAD(P)-bd_dom_sf"/>
</dbReference>
<dbReference type="NCBIfam" id="NF002651">
    <property type="entry name" value="PRK02318.2-4"/>
    <property type="match status" value="1"/>
</dbReference>
<dbReference type="PANTHER" id="PTHR30524:SF0">
    <property type="entry name" value="ALTRONATE OXIDOREDUCTASE-RELATED"/>
    <property type="match status" value="1"/>
</dbReference>
<dbReference type="PANTHER" id="PTHR30524">
    <property type="entry name" value="MANNITOL-1-PHOSPHATE 5-DEHYDROGENASE"/>
    <property type="match status" value="1"/>
</dbReference>
<dbReference type="Pfam" id="PF01232">
    <property type="entry name" value="Mannitol_dh"/>
    <property type="match status" value="1"/>
</dbReference>
<dbReference type="Pfam" id="PF08125">
    <property type="entry name" value="Mannitol_dh_C"/>
    <property type="match status" value="1"/>
</dbReference>
<dbReference type="PRINTS" id="PR00084">
    <property type="entry name" value="MTLDHDRGNASE"/>
</dbReference>
<dbReference type="SUPFAM" id="SSF48179">
    <property type="entry name" value="6-phosphogluconate dehydrogenase C-terminal domain-like"/>
    <property type="match status" value="1"/>
</dbReference>
<dbReference type="SUPFAM" id="SSF51735">
    <property type="entry name" value="NAD(P)-binding Rossmann-fold domains"/>
    <property type="match status" value="1"/>
</dbReference>
<feature type="chain" id="PRO_0000170713" description="Mannitol-1-phosphate 5-dehydrogenase">
    <location>
        <begin position="1"/>
        <end position="360"/>
    </location>
</feature>
<feature type="binding site" evidence="1">
    <location>
        <begin position="6"/>
        <end position="17"/>
    </location>
    <ligand>
        <name>NAD(+)</name>
        <dbReference type="ChEBI" id="CHEBI:57540"/>
    </ligand>
</feature>
<keyword id="KW-0520">NAD</keyword>
<keyword id="KW-0560">Oxidoreductase</keyword>
<keyword id="KW-1185">Reference proteome</keyword>
<sequence length="360" mass="42410">MKKYKALHFGAGNIGRGLISDIYMKNNMDFALVDIDKDLIEKLNKQKSYSIIDFQTNKVFQISNFKAFSIDQEDEIKKWIEQADFISTSIGWSNLASLKKFFENVKLKEKAQIICFENGYKISSFFQSILNIDSNHFVNASVDKIIPNFKSDSLDVYVESYYEIILEQKNESQKKLNFVNYSTDLEAYINKKLFLVNAIHSTIGYLGYLKKYTYINEALNDQQILFKIKRLAKIINEILSKEYLLFKVDYLNDYLEKNLKRFSIKENQDLISRVARNPIQKLSKNERYFLIYNLVKKHNLEIDILLEIYKSIFYYDNKMDKESSKIQSTIENKSLAYALKKFSNLDQEDQEKILKSLAKK</sequence>
<evidence type="ECO:0000255" key="1">
    <source>
        <dbReference type="HAMAP-Rule" id="MF_00196"/>
    </source>
</evidence>
<organism>
    <name type="scientific">Mycoplasmopsis pulmonis (strain UAB CTIP)</name>
    <name type="common">Mycoplasma pulmonis</name>
    <dbReference type="NCBI Taxonomy" id="272635"/>
    <lineage>
        <taxon>Bacteria</taxon>
        <taxon>Bacillati</taxon>
        <taxon>Mycoplasmatota</taxon>
        <taxon>Mycoplasmoidales</taxon>
        <taxon>Metamycoplasmataceae</taxon>
        <taxon>Mycoplasmopsis</taxon>
    </lineage>
</organism>
<gene>
    <name evidence="1" type="primary">mtlD</name>
    <name type="ordered locus">MYPU_7500</name>
</gene>